<dbReference type="EC" id="2.7.4.22"/>
<dbReference type="EMBL" id="AE009950">
    <property type="protein sequence ID" value="AAL81531.1"/>
    <property type="molecule type" value="Genomic_DNA"/>
</dbReference>
<dbReference type="RefSeq" id="WP_011012554.1">
    <property type="nucleotide sequence ID" value="NC_003413.1"/>
</dbReference>
<dbReference type="PDB" id="2BMU">
    <property type="method" value="X-ray"/>
    <property type="resolution" value="2.55 A"/>
    <property type="chains" value="A/B=1-225"/>
</dbReference>
<dbReference type="PDB" id="2BRI">
    <property type="method" value="X-ray"/>
    <property type="resolution" value="3.00 A"/>
    <property type="chains" value="A/B=1-225"/>
</dbReference>
<dbReference type="PDB" id="2BRX">
    <property type="method" value="X-ray"/>
    <property type="resolution" value="2.40 A"/>
    <property type="chains" value="A/B=1-225"/>
</dbReference>
<dbReference type="PDB" id="2JI5">
    <property type="method" value="X-ray"/>
    <property type="resolution" value="2.45 A"/>
    <property type="chains" value="A/B=1-225"/>
</dbReference>
<dbReference type="PDBsum" id="2BMU"/>
<dbReference type="PDBsum" id="2BRI"/>
<dbReference type="PDBsum" id="2BRX"/>
<dbReference type="PDBsum" id="2JI5"/>
<dbReference type="SMR" id="Q8U122"/>
<dbReference type="STRING" id="186497.PF1407"/>
<dbReference type="PaxDb" id="186497-PF1407"/>
<dbReference type="DNASU" id="1469283"/>
<dbReference type="GeneID" id="1469283"/>
<dbReference type="KEGG" id="pfu:PF1407"/>
<dbReference type="PATRIC" id="fig|186497.12.peg.1470"/>
<dbReference type="eggNOG" id="arCOG00858">
    <property type="taxonomic scope" value="Archaea"/>
</dbReference>
<dbReference type="HOGENOM" id="CLU_079546_0_0_2"/>
<dbReference type="OrthoDB" id="372251at2157"/>
<dbReference type="PhylomeDB" id="Q8U122"/>
<dbReference type="BRENDA" id="2.7.4.22">
    <property type="organism ID" value="5243"/>
</dbReference>
<dbReference type="UniPathway" id="UPA00159">
    <property type="reaction ID" value="UER00275"/>
</dbReference>
<dbReference type="EvolutionaryTrace" id="Q8U122"/>
<dbReference type="Proteomes" id="UP000001013">
    <property type="component" value="Chromosome"/>
</dbReference>
<dbReference type="GO" id="GO:0005737">
    <property type="term" value="C:cytoplasm"/>
    <property type="evidence" value="ECO:0007669"/>
    <property type="project" value="UniProtKB-SubCell"/>
</dbReference>
<dbReference type="GO" id="GO:0005524">
    <property type="term" value="F:ATP binding"/>
    <property type="evidence" value="ECO:0007669"/>
    <property type="project" value="UniProtKB-KW"/>
</dbReference>
<dbReference type="GO" id="GO:0046872">
    <property type="term" value="F:metal ion binding"/>
    <property type="evidence" value="ECO:0007669"/>
    <property type="project" value="UniProtKB-KW"/>
</dbReference>
<dbReference type="GO" id="GO:0033862">
    <property type="term" value="F:UMP kinase activity"/>
    <property type="evidence" value="ECO:0007669"/>
    <property type="project" value="UniProtKB-EC"/>
</dbReference>
<dbReference type="GO" id="GO:0044210">
    <property type="term" value="P:'de novo' CTP biosynthetic process"/>
    <property type="evidence" value="ECO:0007669"/>
    <property type="project" value="UniProtKB-UniRule"/>
</dbReference>
<dbReference type="GO" id="GO:0006225">
    <property type="term" value="P:UDP biosynthetic process"/>
    <property type="evidence" value="ECO:0007669"/>
    <property type="project" value="TreeGrafter"/>
</dbReference>
<dbReference type="CDD" id="cd04253">
    <property type="entry name" value="AAK_UMPK-PyrH-Pf"/>
    <property type="match status" value="1"/>
</dbReference>
<dbReference type="FunFam" id="3.40.1160.10:FF:000030">
    <property type="entry name" value="Uridylate kinase"/>
    <property type="match status" value="1"/>
</dbReference>
<dbReference type="Gene3D" id="3.40.1160.10">
    <property type="entry name" value="Acetylglutamate kinase-like"/>
    <property type="match status" value="1"/>
</dbReference>
<dbReference type="HAMAP" id="MF_01220_A">
    <property type="entry name" value="PyrH_A"/>
    <property type="match status" value="1"/>
</dbReference>
<dbReference type="InterPro" id="IPR036393">
    <property type="entry name" value="AceGlu_kinase-like_sf"/>
</dbReference>
<dbReference type="InterPro" id="IPR001048">
    <property type="entry name" value="Asp/Glu/Uridylate_kinase"/>
</dbReference>
<dbReference type="InterPro" id="IPR011817">
    <property type="entry name" value="Uridylate_kinase"/>
</dbReference>
<dbReference type="InterPro" id="IPR011818">
    <property type="entry name" value="Uridylate_kinase_arch/spir"/>
</dbReference>
<dbReference type="NCBIfam" id="TIGR02076">
    <property type="entry name" value="pyrH_arch"/>
    <property type="match status" value="1"/>
</dbReference>
<dbReference type="PANTHER" id="PTHR42833">
    <property type="entry name" value="URIDYLATE KINASE"/>
    <property type="match status" value="1"/>
</dbReference>
<dbReference type="PANTHER" id="PTHR42833:SF4">
    <property type="entry name" value="URIDYLATE KINASE PUMPKIN, CHLOROPLASTIC"/>
    <property type="match status" value="1"/>
</dbReference>
<dbReference type="Pfam" id="PF00696">
    <property type="entry name" value="AA_kinase"/>
    <property type="match status" value="1"/>
</dbReference>
<dbReference type="PIRSF" id="PIRSF005650">
    <property type="entry name" value="Uridylate_kin"/>
    <property type="match status" value="1"/>
</dbReference>
<dbReference type="SUPFAM" id="SSF53633">
    <property type="entry name" value="Carbamate kinase-like"/>
    <property type="match status" value="1"/>
</dbReference>
<gene>
    <name type="primary">pyrH</name>
    <name type="ordered locus">PF1407</name>
</gene>
<reference key="1">
    <citation type="journal article" date="1999" name="Genetics">
        <title>Divergence of the hyperthermophilic archaea Pyrococcus furiosus and P. horikoshii inferred from complete genomic sequences.</title>
        <authorList>
            <person name="Maeder D.L."/>
            <person name="Weiss R.B."/>
            <person name="Dunn D.M."/>
            <person name="Cherry J.L."/>
            <person name="Gonzalez J.M."/>
            <person name="DiRuggiero J."/>
            <person name="Robb F.T."/>
        </authorList>
    </citation>
    <scope>NUCLEOTIDE SEQUENCE [LARGE SCALE GENOMIC DNA]</scope>
    <source>
        <strain>ATCC 43587 / DSM 3638 / JCM 8422 / Vc1</strain>
    </source>
</reference>
<reference key="2">
    <citation type="journal article" date="2005" name="Biochim. Biophys. Acta">
        <title>First-time crystallization and preliminary X-ray crystallographic analysis of a bacterial-archaeal type UMP kinase, a key enzyme in microbial pyrimidine biosynthesis.</title>
        <authorList>
            <person name="Marco-Marin C."/>
            <person name="Escamilla-Honrubia J.M."/>
            <person name="Rubio V."/>
        </authorList>
    </citation>
    <scope>FUNCTION</scope>
    <scope>SUBSTRATE SPECIFICITY</scope>
    <scope>CRYSTALLIZATION</scope>
    <source>
        <strain>ATCC 43587 / DSM 3638 / JCM 8422 / Vc1</strain>
    </source>
</reference>
<reference key="3">
    <citation type="journal article" date="2005" name="J. Mol. Biol.">
        <title>The crystal structure of Pyrococcus furiosus UMP kinase provides insight into catalysis and regulation in microbial pyrimidine nucleotide biosynthesis.</title>
        <authorList>
            <person name="Marco-Marin C."/>
            <person name="Gil-Ortiz F."/>
            <person name="Rubio V."/>
        </authorList>
    </citation>
    <scope>X-RAY CRYSTALLOGRAPHY (2.4 ANGSTROMS) OF APOENZYME AND IN COMPLEX WITH UMP; ATP ANALOG AND MAGNESIUM</scope>
    <scope>SUBUNIT</scope>
    <source>
        <strain>ATCC 43587 / DSM 3638 / JCM 8422 / Vc1</strain>
    </source>
</reference>
<reference key="4">
    <citation type="submission" date="2007-10" db="PDB data bank">
        <title>Structure of UMP kinase from Pyrococcus furiosus complexed with UTP.</title>
        <authorList>
            <person name="Marco-Marin C."/>
            <person name="Rubio V."/>
        </authorList>
    </citation>
    <scope>X-RAY CRYSTALLOGRAPHY (2.45 ANGSTROMS) IN COMPLEX WITH UTP</scope>
    <source>
        <strain>ATCC 43587 / DSM 3638 / JCM 8422 / Vc1</strain>
    </source>
</reference>
<feature type="chain" id="PRO_0000143923" description="Uridylate kinase">
    <location>
        <begin position="1"/>
        <end position="225"/>
    </location>
</feature>
<feature type="binding site" evidence="3">
    <location>
        <position position="6"/>
    </location>
    <ligand>
        <name>Mg(2+)</name>
        <dbReference type="ChEBI" id="CHEBI:18420"/>
        <label>1</label>
    </ligand>
</feature>
<feature type="binding site">
    <location>
        <begin position="9"/>
        <end position="10"/>
    </location>
    <ligand>
        <name>ATP</name>
        <dbReference type="ChEBI" id="CHEBI:30616"/>
    </ligand>
</feature>
<feature type="binding site" evidence="3">
    <location>
        <position position="44"/>
    </location>
    <ligand>
        <name>UMP</name>
        <dbReference type="ChEBI" id="CHEBI:57865"/>
    </ligand>
</feature>
<feature type="binding site">
    <location>
        <position position="45"/>
    </location>
    <ligand>
        <name>ATP</name>
        <dbReference type="ChEBI" id="CHEBI:30616"/>
    </ligand>
</feature>
<feature type="binding site" evidence="1">
    <location>
        <position position="49"/>
    </location>
    <ligand>
        <name>ATP</name>
        <dbReference type="ChEBI" id="CHEBI:30616"/>
    </ligand>
</feature>
<feature type="binding site" evidence="3">
    <location>
        <position position="66"/>
    </location>
    <ligand>
        <name>UMP</name>
        <dbReference type="ChEBI" id="CHEBI:57865"/>
    </ligand>
</feature>
<feature type="binding site" evidence="3">
    <location>
        <begin position="114"/>
        <end position="120"/>
    </location>
    <ligand>
        <name>UMP</name>
        <dbReference type="ChEBI" id="CHEBI:57865"/>
    </ligand>
</feature>
<feature type="binding site" evidence="3">
    <location>
        <position position="120"/>
    </location>
    <ligand>
        <name>Mg(2+)</name>
        <dbReference type="ChEBI" id="CHEBI:18420"/>
        <label>1</label>
    </ligand>
</feature>
<feature type="binding site" evidence="3">
    <location>
        <position position="121"/>
    </location>
    <ligand>
        <name>Mg(2+)</name>
        <dbReference type="ChEBI" id="CHEBI:18420"/>
        <label>1</label>
    </ligand>
</feature>
<feature type="binding site" evidence="3">
    <location>
        <position position="121"/>
    </location>
    <ligand>
        <name>Mg(2+)</name>
        <dbReference type="ChEBI" id="CHEBI:18420"/>
        <label>2</label>
    </ligand>
</feature>
<feature type="binding site">
    <location>
        <position position="140"/>
    </location>
    <ligand>
        <name>ATP</name>
        <dbReference type="ChEBI" id="CHEBI:30616"/>
    </ligand>
</feature>
<feature type="binding site">
    <location>
        <position position="141"/>
    </location>
    <ligand>
        <name>ATP</name>
        <dbReference type="ChEBI" id="CHEBI:30616"/>
    </ligand>
</feature>
<feature type="binding site">
    <location>
        <position position="146"/>
    </location>
    <ligand>
        <name>ATP</name>
        <dbReference type="ChEBI" id="CHEBI:30616"/>
    </ligand>
</feature>
<feature type="binding site">
    <location>
        <position position="149"/>
    </location>
    <ligand>
        <name>ATP</name>
        <dbReference type="ChEBI" id="CHEBI:30616"/>
    </ligand>
</feature>
<feature type="binding site" evidence="3">
    <location>
        <position position="179"/>
    </location>
    <ligand>
        <name>UMP</name>
        <dbReference type="ChEBI" id="CHEBI:57865"/>
    </ligand>
</feature>
<feature type="binding site">
    <location>
        <position position="182"/>
    </location>
    <ligand>
        <name>ATP</name>
        <dbReference type="ChEBI" id="CHEBI:30616"/>
    </ligand>
</feature>
<feature type="binding site" evidence="3">
    <location>
        <position position="182"/>
    </location>
    <ligand>
        <name>Mg(2+)</name>
        <dbReference type="ChEBI" id="CHEBI:18420"/>
        <label>2</label>
    </ligand>
</feature>
<feature type="strand" evidence="8">
    <location>
        <begin position="2"/>
        <end position="7"/>
    </location>
</feature>
<feature type="helix" evidence="8">
    <location>
        <begin position="9"/>
        <end position="12"/>
    </location>
</feature>
<feature type="strand" evidence="8">
    <location>
        <begin position="14"/>
        <end position="16"/>
    </location>
</feature>
<feature type="helix" evidence="8">
    <location>
        <begin position="19"/>
        <end position="35"/>
    </location>
</feature>
<feature type="strand" evidence="8">
    <location>
        <begin position="36"/>
        <end position="42"/>
    </location>
</feature>
<feature type="helix" evidence="8">
    <location>
        <begin position="45"/>
        <end position="56"/>
    </location>
</feature>
<feature type="turn" evidence="8">
    <location>
        <begin position="57"/>
        <end position="59"/>
    </location>
</feature>
<feature type="helix" evidence="8">
    <location>
        <begin position="62"/>
        <end position="84"/>
    </location>
</feature>
<feature type="helix" evidence="8">
    <location>
        <begin position="85"/>
        <end position="87"/>
    </location>
</feature>
<feature type="helix" evidence="8">
    <location>
        <begin position="96"/>
        <end position="104"/>
    </location>
</feature>
<feature type="strand" evidence="6">
    <location>
        <begin position="115"/>
        <end position="118"/>
    </location>
</feature>
<feature type="helix" evidence="8">
    <location>
        <begin position="120"/>
        <end position="130"/>
    </location>
</feature>
<feature type="strand" evidence="8">
    <location>
        <begin position="134"/>
        <end position="139"/>
    </location>
</feature>
<feature type="strand" evidence="8">
    <location>
        <begin position="141"/>
        <end position="144"/>
    </location>
</feature>
<feature type="strand" evidence="8">
    <location>
        <begin position="146"/>
        <end position="148"/>
    </location>
</feature>
<feature type="turn" evidence="8">
    <location>
        <begin position="150"/>
        <end position="152"/>
    </location>
</feature>
<feature type="strand" evidence="8">
    <location>
        <begin position="160"/>
        <end position="162"/>
    </location>
</feature>
<feature type="helix" evidence="8">
    <location>
        <begin position="164"/>
        <end position="172"/>
    </location>
</feature>
<feature type="strand" evidence="7">
    <location>
        <begin position="182"/>
        <end position="184"/>
    </location>
</feature>
<feature type="helix" evidence="8">
    <location>
        <begin position="186"/>
        <end position="195"/>
    </location>
</feature>
<feature type="strand" evidence="8">
    <location>
        <begin position="199"/>
        <end position="202"/>
    </location>
</feature>
<feature type="helix" evidence="8">
    <location>
        <begin position="204"/>
        <end position="207"/>
    </location>
</feature>
<feature type="helix" evidence="8">
    <location>
        <begin position="210"/>
        <end position="214"/>
    </location>
</feature>
<feature type="strand" evidence="8">
    <location>
        <begin position="218"/>
        <end position="223"/>
    </location>
</feature>
<keyword id="KW-0002">3D-structure</keyword>
<keyword id="KW-0067">ATP-binding</keyword>
<keyword id="KW-0963">Cytoplasm</keyword>
<keyword id="KW-0418">Kinase</keyword>
<keyword id="KW-0460">Magnesium</keyword>
<keyword id="KW-0479">Metal-binding</keyword>
<keyword id="KW-0547">Nucleotide-binding</keyword>
<keyword id="KW-0665">Pyrimidine biosynthesis</keyword>
<keyword id="KW-1185">Reference proteome</keyword>
<keyword id="KW-0808">Transferase</keyword>
<organism>
    <name type="scientific">Pyrococcus furiosus (strain ATCC 43587 / DSM 3638 / JCM 8422 / Vc1)</name>
    <dbReference type="NCBI Taxonomy" id="186497"/>
    <lineage>
        <taxon>Archaea</taxon>
        <taxon>Methanobacteriati</taxon>
        <taxon>Methanobacteriota</taxon>
        <taxon>Thermococci</taxon>
        <taxon>Thermococcales</taxon>
        <taxon>Thermococcaceae</taxon>
        <taxon>Pyrococcus</taxon>
    </lineage>
</organism>
<evidence type="ECO:0000250" key="1"/>
<evidence type="ECO:0000269" key="2">
    <source>
    </source>
</evidence>
<evidence type="ECO:0000269" key="3">
    <source>
    </source>
</evidence>
<evidence type="ECO:0000269" key="4">
    <source ref="4"/>
</evidence>
<evidence type="ECO:0000305" key="5"/>
<evidence type="ECO:0007829" key="6">
    <source>
        <dbReference type="PDB" id="2BMU"/>
    </source>
</evidence>
<evidence type="ECO:0007829" key="7">
    <source>
        <dbReference type="PDB" id="2BRI"/>
    </source>
</evidence>
<evidence type="ECO:0007829" key="8">
    <source>
        <dbReference type="PDB" id="2BRX"/>
    </source>
</evidence>
<sequence length="225" mass="24491">MRIVFDIGGSVLVPENPDIDFIKEIAYQLTKVSEDHEVAVVVGGGKLARKYIEVAEKFNSSETFKDFIGIQITRANAMLLIAALREKAYPVVVEDFWEAWKAVQLKKIPVMGGTHPGHTTDAVAALLAEFLKADLLVVITNVDGVYTADPKKDPTAKKIKKMKPEELLEIVGKGIEKAGSSSVIDPLAAKIIARSGIKTIVIGKEDAKDLFRVIKGDHNGTTIEP</sequence>
<protein>
    <recommendedName>
        <fullName>Uridylate kinase</fullName>
        <shortName>UK</shortName>
        <ecNumber>2.7.4.22</ecNumber>
    </recommendedName>
    <alternativeName>
        <fullName>Uridine monophosphate kinase</fullName>
        <shortName>UMP kinase</shortName>
        <shortName>UMPK</shortName>
    </alternativeName>
</protein>
<accession>Q8U122</accession>
<proteinExistence type="evidence at protein level"/>
<comment type="function">
    <text evidence="2">Catalyzes the reversible phosphorylation of UMP to UDP, with ATP as the most efficient phosphate donor.</text>
</comment>
<comment type="catalytic activity">
    <reaction>
        <text>UMP + ATP = UDP + ADP</text>
        <dbReference type="Rhea" id="RHEA:24400"/>
        <dbReference type="ChEBI" id="CHEBI:30616"/>
        <dbReference type="ChEBI" id="CHEBI:57865"/>
        <dbReference type="ChEBI" id="CHEBI:58223"/>
        <dbReference type="ChEBI" id="CHEBI:456216"/>
        <dbReference type="EC" id="2.7.4.22"/>
    </reaction>
</comment>
<comment type="activity regulation">
    <text evidence="1">Inhibited by UTP.</text>
</comment>
<comment type="pathway">
    <text>Pyrimidine metabolism; CTP biosynthesis via de novo pathway; UDP from UMP (UMPK route): step 1/1.</text>
</comment>
<comment type="subunit">
    <text evidence="3 4">Homohexamer; trimer of dimers.</text>
</comment>
<comment type="subcellular location">
    <subcellularLocation>
        <location evidence="1">Cytoplasm</location>
    </subcellularLocation>
</comment>
<comment type="similarity">
    <text evidence="5">Belongs to the UMP kinase family.</text>
</comment>
<name>PYRH_PYRFU</name>